<accession>B4S687</accession>
<evidence type="ECO:0000255" key="1">
    <source>
        <dbReference type="HAMAP-Rule" id="MF_00835"/>
    </source>
</evidence>
<sequence>MQQLNKTLIRQRFGRQLHGYNRHAFIQKKMAGHLADMVSASLASSEVGRLFEIGVGSAALTDALLHRLRIDRYYANDLVPQCRQMVETVTALHGVDSAEFLDGDIEALREIPGDLDVIVSGATVQWLEDLPGFFHRMAGALKPGGVLAFSTFGHDNMQEIRALESVGLHYHTLAEMQAMAGELYEVTGMEEERHQLDFTGPEAVLRHISRTGVNGLDGRAWTKSRHRAFIDRYRRAFSSGDGVRLTYHTMYCCFRKCPASAGVEATCC</sequence>
<reference key="1">
    <citation type="submission" date="2008-06" db="EMBL/GenBank/DDBJ databases">
        <title>Complete sequence of chromosome of Prosthecochloris aestuarii DSM 271.</title>
        <authorList>
            <consortium name="US DOE Joint Genome Institute"/>
            <person name="Lucas S."/>
            <person name="Copeland A."/>
            <person name="Lapidus A."/>
            <person name="Glavina del Rio T."/>
            <person name="Dalin E."/>
            <person name="Tice H."/>
            <person name="Bruce D."/>
            <person name="Goodwin L."/>
            <person name="Pitluck S."/>
            <person name="Schmutz J."/>
            <person name="Larimer F."/>
            <person name="Land M."/>
            <person name="Hauser L."/>
            <person name="Kyrpides N."/>
            <person name="Anderson I."/>
            <person name="Liu Z."/>
            <person name="Li T."/>
            <person name="Zhao F."/>
            <person name="Overmann J."/>
            <person name="Bryant D.A."/>
            <person name="Richardson P."/>
        </authorList>
    </citation>
    <scope>NUCLEOTIDE SEQUENCE [LARGE SCALE GENOMIC DNA]</scope>
    <source>
        <strain>DSM 271 / SK 413</strain>
    </source>
</reference>
<protein>
    <recommendedName>
        <fullName evidence="1">Malonyl-[acyl-carrier protein] O-methyltransferase</fullName>
        <shortName evidence="1">Malonyl-ACP O-methyltransferase</shortName>
        <ecNumber evidence="1">2.1.1.197</ecNumber>
    </recommendedName>
    <alternativeName>
        <fullName evidence="1">Biotin synthesis protein BioC</fullName>
    </alternativeName>
</protein>
<organism>
    <name type="scientific">Prosthecochloris aestuarii (strain DSM 271 / SK 413)</name>
    <dbReference type="NCBI Taxonomy" id="290512"/>
    <lineage>
        <taxon>Bacteria</taxon>
        <taxon>Pseudomonadati</taxon>
        <taxon>Chlorobiota</taxon>
        <taxon>Chlorobiia</taxon>
        <taxon>Chlorobiales</taxon>
        <taxon>Chlorobiaceae</taxon>
        <taxon>Prosthecochloris</taxon>
    </lineage>
</organism>
<comment type="function">
    <text evidence="1">Converts the free carboxyl group of a malonyl-thioester to its methyl ester by transfer of a methyl group from S-adenosyl-L-methionine (SAM). It allows to synthesize pimeloyl-ACP via the fatty acid synthetic pathway.</text>
</comment>
<comment type="catalytic activity">
    <reaction evidence="1">
        <text>malonyl-[ACP] + S-adenosyl-L-methionine = malonyl-[ACP] methyl ester + S-adenosyl-L-homocysteine</text>
        <dbReference type="Rhea" id="RHEA:17105"/>
        <dbReference type="Rhea" id="RHEA-COMP:9623"/>
        <dbReference type="Rhea" id="RHEA-COMP:9954"/>
        <dbReference type="ChEBI" id="CHEBI:57856"/>
        <dbReference type="ChEBI" id="CHEBI:59789"/>
        <dbReference type="ChEBI" id="CHEBI:78449"/>
        <dbReference type="ChEBI" id="CHEBI:78845"/>
        <dbReference type="EC" id="2.1.1.197"/>
    </reaction>
</comment>
<comment type="pathway">
    <text evidence="1">Cofactor biosynthesis; biotin biosynthesis.</text>
</comment>
<comment type="similarity">
    <text evidence="1">Belongs to the methyltransferase superfamily.</text>
</comment>
<proteinExistence type="inferred from homology"/>
<gene>
    <name evidence="1" type="primary">bioC</name>
    <name type="ordered locus">Paes_2187</name>
</gene>
<dbReference type="EC" id="2.1.1.197" evidence="1"/>
<dbReference type="EMBL" id="CP001108">
    <property type="protein sequence ID" value="ACF47189.1"/>
    <property type="molecule type" value="Genomic_DNA"/>
</dbReference>
<dbReference type="RefSeq" id="WP_012506720.1">
    <property type="nucleotide sequence ID" value="NC_011059.1"/>
</dbReference>
<dbReference type="SMR" id="B4S687"/>
<dbReference type="STRING" id="290512.Paes_2187"/>
<dbReference type="KEGG" id="paa:Paes_2187"/>
<dbReference type="eggNOG" id="COG4106">
    <property type="taxonomic scope" value="Bacteria"/>
</dbReference>
<dbReference type="HOGENOM" id="CLU_046586_1_0_10"/>
<dbReference type="UniPathway" id="UPA00078"/>
<dbReference type="Proteomes" id="UP000002725">
    <property type="component" value="Chromosome"/>
</dbReference>
<dbReference type="GO" id="GO:0010340">
    <property type="term" value="F:carboxyl-O-methyltransferase activity"/>
    <property type="evidence" value="ECO:0007669"/>
    <property type="project" value="UniProtKB-UniRule"/>
</dbReference>
<dbReference type="GO" id="GO:0102130">
    <property type="term" value="F:malonyl-CoA methyltransferase activity"/>
    <property type="evidence" value="ECO:0007669"/>
    <property type="project" value="UniProtKB-EC"/>
</dbReference>
<dbReference type="GO" id="GO:0008757">
    <property type="term" value="F:S-adenosylmethionine-dependent methyltransferase activity"/>
    <property type="evidence" value="ECO:0007669"/>
    <property type="project" value="InterPro"/>
</dbReference>
<dbReference type="GO" id="GO:0009102">
    <property type="term" value="P:biotin biosynthetic process"/>
    <property type="evidence" value="ECO:0007669"/>
    <property type="project" value="UniProtKB-UniRule"/>
</dbReference>
<dbReference type="GO" id="GO:0032259">
    <property type="term" value="P:methylation"/>
    <property type="evidence" value="ECO:0007669"/>
    <property type="project" value="UniProtKB-KW"/>
</dbReference>
<dbReference type="CDD" id="cd02440">
    <property type="entry name" value="AdoMet_MTases"/>
    <property type="match status" value="1"/>
</dbReference>
<dbReference type="Gene3D" id="3.40.50.150">
    <property type="entry name" value="Vaccinia Virus protein VP39"/>
    <property type="match status" value="1"/>
</dbReference>
<dbReference type="HAMAP" id="MF_00835">
    <property type="entry name" value="BioC"/>
    <property type="match status" value="1"/>
</dbReference>
<dbReference type="InterPro" id="IPR011814">
    <property type="entry name" value="BioC"/>
</dbReference>
<dbReference type="InterPro" id="IPR013216">
    <property type="entry name" value="Methyltransf_11"/>
</dbReference>
<dbReference type="InterPro" id="IPR029063">
    <property type="entry name" value="SAM-dependent_MTases_sf"/>
</dbReference>
<dbReference type="NCBIfam" id="TIGR02072">
    <property type="entry name" value="BioC"/>
    <property type="match status" value="1"/>
</dbReference>
<dbReference type="PANTHER" id="PTHR43861:SF1">
    <property type="entry name" value="TRANS-ACONITATE 2-METHYLTRANSFERASE"/>
    <property type="match status" value="1"/>
</dbReference>
<dbReference type="PANTHER" id="PTHR43861">
    <property type="entry name" value="TRANS-ACONITATE 2-METHYLTRANSFERASE-RELATED"/>
    <property type="match status" value="1"/>
</dbReference>
<dbReference type="Pfam" id="PF08241">
    <property type="entry name" value="Methyltransf_11"/>
    <property type="match status" value="1"/>
</dbReference>
<dbReference type="SUPFAM" id="SSF53335">
    <property type="entry name" value="S-adenosyl-L-methionine-dependent methyltransferases"/>
    <property type="match status" value="1"/>
</dbReference>
<keyword id="KW-0093">Biotin biosynthesis</keyword>
<keyword id="KW-0489">Methyltransferase</keyword>
<keyword id="KW-0949">S-adenosyl-L-methionine</keyword>
<keyword id="KW-0808">Transferase</keyword>
<name>BIOC_PROA2</name>
<feature type="chain" id="PRO_0000412518" description="Malonyl-[acyl-carrier protein] O-methyltransferase">
    <location>
        <begin position="1"/>
        <end position="268"/>
    </location>
</feature>